<accession>B4LY66</accession>
<gene>
    <name evidence="1" type="primary">soti</name>
    <name type="ORF">GJ24453</name>
</gene>
<feature type="chain" id="PRO_0000379449" description="Male-specific protein scotti">
    <location>
        <begin position="1"/>
        <end position="158"/>
    </location>
</feature>
<feature type="region of interest" description="Disordered" evidence="2">
    <location>
        <begin position="24"/>
        <end position="43"/>
    </location>
</feature>
<feature type="compositionally biased region" description="Acidic residues" evidence="2">
    <location>
        <begin position="30"/>
        <end position="42"/>
    </location>
</feature>
<keyword id="KW-0217">Developmental protein</keyword>
<keyword id="KW-0221">Differentiation</keyword>
<keyword id="KW-1185">Reference proteome</keyword>
<keyword id="KW-0744">Spermatogenesis</keyword>
<evidence type="ECO:0000250" key="1">
    <source>
        <dbReference type="UniProtKB" id="Q9VFK3"/>
    </source>
</evidence>
<evidence type="ECO:0000256" key="2">
    <source>
        <dbReference type="SAM" id="MobiDB-lite"/>
    </source>
</evidence>
<evidence type="ECO:0000305" key="3"/>
<evidence type="ECO:0000312" key="4">
    <source>
        <dbReference type="EMBL" id="EDW67954.1"/>
    </source>
</evidence>
<organism>
    <name type="scientific">Drosophila virilis</name>
    <name type="common">Fruit fly</name>
    <dbReference type="NCBI Taxonomy" id="7244"/>
    <lineage>
        <taxon>Eukaryota</taxon>
        <taxon>Metazoa</taxon>
        <taxon>Ecdysozoa</taxon>
        <taxon>Arthropoda</taxon>
        <taxon>Hexapoda</taxon>
        <taxon>Insecta</taxon>
        <taxon>Pterygota</taxon>
        <taxon>Neoptera</taxon>
        <taxon>Endopterygota</taxon>
        <taxon>Diptera</taxon>
        <taxon>Brachycera</taxon>
        <taxon>Muscomorpha</taxon>
        <taxon>Ephydroidea</taxon>
        <taxon>Drosophilidae</taxon>
        <taxon>Drosophila</taxon>
    </lineage>
</organism>
<sequence length="158" mass="17970">MEQGVVEELIHLQLPEVEAVDVVNVPDGNGDGDGDGDGDGNDAWERQLDEVQMQAMRLENPQVAMLLDAPHEPPIELHHMLEPVNVPQRPRKKRSFLTISKPFHVQPERCALISNGWRAVQCVQPEKRGEYFANYLIKHMNSRNYPNGEGLPNRWGQF</sequence>
<name>SOTI_DROVI</name>
<proteinExistence type="inferred from homology"/>
<comment type="function">
    <text evidence="1">Post-meiotically transcribed gene that has a role in late spermiogenesis; required for actin cone progression during spermatid individualization.</text>
</comment>
<comment type="similarity">
    <text evidence="3">Belongs to the male-specific scotti family.</text>
</comment>
<protein>
    <recommendedName>
        <fullName evidence="1">Male-specific protein scotti</fullName>
    </recommendedName>
</protein>
<dbReference type="EMBL" id="CH940650">
    <property type="protein sequence ID" value="EDW67954.1"/>
    <property type="molecule type" value="Genomic_DNA"/>
</dbReference>
<dbReference type="RefSeq" id="XP_002054434.1">
    <property type="nucleotide sequence ID" value="XM_002054398.2"/>
</dbReference>
<dbReference type="RefSeq" id="XP_015027688.1">
    <property type="nucleotide sequence ID" value="XM_015172202.3"/>
</dbReference>
<dbReference type="FunCoup" id="B4LY66">
    <property type="interactions" value="2"/>
</dbReference>
<dbReference type="STRING" id="7244.B4LY66"/>
<dbReference type="EnsemblMetazoa" id="FBtr0240378">
    <property type="protein sequence ID" value="FBpp0238870"/>
    <property type="gene ID" value="FBgn0211533"/>
</dbReference>
<dbReference type="EnsemblMetazoa" id="FBtr0444498">
    <property type="protein sequence ID" value="FBpp0400827"/>
    <property type="gene ID" value="FBgn0211533"/>
</dbReference>
<dbReference type="EnsemblMetazoa" id="XM_015172202.2">
    <property type="protein sequence ID" value="XP_015027688.1"/>
    <property type="gene ID" value="LOC6631203"/>
</dbReference>
<dbReference type="GeneID" id="6631203"/>
<dbReference type="KEGG" id="dvi:6631203"/>
<dbReference type="CTD" id="41748"/>
<dbReference type="eggNOG" id="ENOG502T96N">
    <property type="taxonomic scope" value="Eukaryota"/>
</dbReference>
<dbReference type="HOGENOM" id="CLU_120156_0_0_1"/>
<dbReference type="InParanoid" id="B4LY66"/>
<dbReference type="OMA" id="LPQRWGQ"/>
<dbReference type="OrthoDB" id="7867455at2759"/>
<dbReference type="PhylomeDB" id="B4LY66"/>
<dbReference type="Proteomes" id="UP000008792">
    <property type="component" value="Unassembled WGS sequence"/>
</dbReference>
<dbReference type="GO" id="GO:0007291">
    <property type="term" value="P:sperm individualization"/>
    <property type="evidence" value="ECO:0000250"/>
    <property type="project" value="UniProtKB"/>
</dbReference>
<dbReference type="InterPro" id="IPR031397">
    <property type="entry name" value="Soti"/>
</dbReference>
<dbReference type="Pfam" id="PF17079">
    <property type="entry name" value="SOTI"/>
    <property type="match status" value="1"/>
</dbReference>
<reference evidence="4" key="1">
    <citation type="journal article" date="2007" name="Nature">
        <title>Evolution of genes and genomes on the Drosophila phylogeny.</title>
        <authorList>
            <consortium name="Drosophila 12 genomes consortium"/>
        </authorList>
    </citation>
    <scope>NUCLEOTIDE SEQUENCE [LARGE SCALE GENOMIC DNA]</scope>
    <source>
        <strain evidence="4">Tucson 15010-1051.87</strain>
    </source>
</reference>